<reference key="1">
    <citation type="journal article" date="2006" name="Mol. Genet. Genomics">
        <title>The chloroplast genome of Nicotiana sylvestris and Nicotiana tomentosiformis: complete sequencing confirms that the Nicotiana sylvestris progenitor is the maternal genome donor of Nicotiana tabacum.</title>
        <authorList>
            <person name="Yukawa M."/>
            <person name="Tsudzuki T."/>
            <person name="Sugiura M."/>
        </authorList>
    </citation>
    <scope>NUCLEOTIDE SEQUENCE [LARGE SCALE GENOMIC DNA]</scope>
</reference>
<gene>
    <name evidence="1" type="primary">rpoB</name>
</gene>
<geneLocation type="chloroplast"/>
<sequence length="1070" mass="120547">MLGDGNEGISTIPGFNQIQFEGFCRFIDQGLTEELYKFPKIEDTDQEIEFQLFVETYQLVEPLIKERDAVYESLTYSSELYVSAGLIWKNSRDMQEQTIFIGNIPLMNSLGTSIVNGIYRIVINQILQSPGIYYRSELDHNGISVYTGTIISDWGGRSELEIDRKARIWARVSRKQKISILVLSSAMGLNLREILENVCYPEIFLSFLSDKERKKIGSKENAILEFYQQFACVGGDPVFSESLCKELQKKFFQQRCELGRIGRRNMNRRLNLDIPQNNTFLLPRDILAAADHLIGLKFGMGALDDMNHLKNKRIRSVADLLQDQFGLALVRLENVVRGTICGAIRHKLIPTPQNLVTSTPLTTTYESFFGLHPLSQVLDRTNPLTQIVHGRKLSYLGPGGLTGRTASFRIRDIHPSHYGRICPIDTSEGINVGLIGSLAIHARIGHWGSLESPFYEISERSTGVRMLYLSPGRDEYYMVAAGNSLALNQDIQEEQVVPARYRQEFLTIAWEQVHLRSIFPFQYFSIGASLIPFIEHNDANRALMSSNMQRQAVPLSRSEKCIVGTGLERQAALDSGALAIAEREGRVVYTNTDKILLAGNGDILSIPLVIYQRSNKNTCMHQKLQVPRGKCIKKGQILADGAATVGGELALGKNVLVAYMPWEGYNSEDAVLISERLVYEDIYTSFHIRKYEIQTHVTSQGPEKVTNEIPHLEAHLLRNLDKNGIVMLGSWVETGDILVGKLTPQVVKESSYAPEDRLLRAILGIQVSTSKETCLKLPIGGRGRVIDVRWIQKRGGSSYNPETIRVYILQKREIKVGDKVAGRHGNKGIISKILPRQDMPYLQDGRSVDMVFNPLGVPSRMNVGQIFECSLGLAGSLLDRHYRIAPFDERYEQEASRKLVFSELYEASKQTANPWVFEPEYPGKSRIFDGRTGNPFEQPVIIGKPYILKLIHQVDDKIHGRSSGHYALVTQQPLRGRAKQGGQRVGEMEVWALEGFGVAHILQEMLTYKSDHIRARQEVLGTTIIGGTIPNPEDAPESFRLLVRELRSLALELNHFLVSEKNFQINRKEA</sequence>
<comment type="function">
    <text evidence="1">DNA-dependent RNA polymerase catalyzes the transcription of DNA into RNA using the four ribonucleoside triphosphates as substrates.</text>
</comment>
<comment type="catalytic activity">
    <reaction evidence="1">
        <text>RNA(n) + a ribonucleoside 5'-triphosphate = RNA(n+1) + diphosphate</text>
        <dbReference type="Rhea" id="RHEA:21248"/>
        <dbReference type="Rhea" id="RHEA-COMP:14527"/>
        <dbReference type="Rhea" id="RHEA-COMP:17342"/>
        <dbReference type="ChEBI" id="CHEBI:33019"/>
        <dbReference type="ChEBI" id="CHEBI:61557"/>
        <dbReference type="ChEBI" id="CHEBI:140395"/>
        <dbReference type="EC" id="2.7.7.6"/>
    </reaction>
</comment>
<comment type="subunit">
    <text evidence="1">In plastids the minimal PEP RNA polymerase catalytic core is composed of four subunits: alpha, beta, beta', and beta''. When a (nuclear-encoded) sigma factor is associated with the core the holoenzyme is formed, which can initiate transcription.</text>
</comment>
<comment type="subcellular location">
    <subcellularLocation>
        <location>Plastid</location>
        <location>Chloroplast</location>
    </subcellularLocation>
</comment>
<comment type="similarity">
    <text evidence="1">Belongs to the RNA polymerase beta chain family.</text>
</comment>
<evidence type="ECO:0000255" key="1">
    <source>
        <dbReference type="HAMAP-Rule" id="MF_01321"/>
    </source>
</evidence>
<proteinExistence type="inferred from homology"/>
<dbReference type="EC" id="2.7.7.6" evidence="1"/>
<dbReference type="EMBL" id="AB237912">
    <property type="protein sequence ID" value="BAE46639.1"/>
    <property type="molecule type" value="Genomic_DNA"/>
</dbReference>
<dbReference type="RefSeq" id="YP_358664.1">
    <property type="nucleotide sequence ID" value="NC_007500.1"/>
</dbReference>
<dbReference type="SMR" id="Q3C1G7"/>
<dbReference type="GeneID" id="3735090"/>
<dbReference type="KEGG" id="nsy:3735090"/>
<dbReference type="OrthoDB" id="18070at4085"/>
<dbReference type="Proteomes" id="UP000189701">
    <property type="component" value="Chloroplast Pltd"/>
</dbReference>
<dbReference type="GO" id="GO:0009507">
    <property type="term" value="C:chloroplast"/>
    <property type="evidence" value="ECO:0007669"/>
    <property type="project" value="UniProtKB-SubCell"/>
</dbReference>
<dbReference type="GO" id="GO:0000428">
    <property type="term" value="C:DNA-directed RNA polymerase complex"/>
    <property type="evidence" value="ECO:0007669"/>
    <property type="project" value="UniProtKB-KW"/>
</dbReference>
<dbReference type="GO" id="GO:0005739">
    <property type="term" value="C:mitochondrion"/>
    <property type="evidence" value="ECO:0007669"/>
    <property type="project" value="GOC"/>
</dbReference>
<dbReference type="GO" id="GO:0003677">
    <property type="term" value="F:DNA binding"/>
    <property type="evidence" value="ECO:0007669"/>
    <property type="project" value="UniProtKB-UniRule"/>
</dbReference>
<dbReference type="GO" id="GO:0003899">
    <property type="term" value="F:DNA-directed RNA polymerase activity"/>
    <property type="evidence" value="ECO:0007669"/>
    <property type="project" value="UniProtKB-UniRule"/>
</dbReference>
<dbReference type="GO" id="GO:0032549">
    <property type="term" value="F:ribonucleoside binding"/>
    <property type="evidence" value="ECO:0007669"/>
    <property type="project" value="InterPro"/>
</dbReference>
<dbReference type="GO" id="GO:0006351">
    <property type="term" value="P:DNA-templated transcription"/>
    <property type="evidence" value="ECO:0007669"/>
    <property type="project" value="UniProtKB-UniRule"/>
</dbReference>
<dbReference type="CDD" id="cd00653">
    <property type="entry name" value="RNA_pol_B_RPB2"/>
    <property type="match status" value="1"/>
</dbReference>
<dbReference type="FunFam" id="3.90.1110.10:FF:000009">
    <property type="entry name" value="DNA-directed RNA polymerase subunit beta"/>
    <property type="match status" value="1"/>
</dbReference>
<dbReference type="Gene3D" id="2.40.50.100">
    <property type="match status" value="1"/>
</dbReference>
<dbReference type="Gene3D" id="2.40.50.150">
    <property type="match status" value="1"/>
</dbReference>
<dbReference type="Gene3D" id="3.90.1100.10">
    <property type="match status" value="1"/>
</dbReference>
<dbReference type="Gene3D" id="2.30.150.10">
    <property type="entry name" value="DNA-directed RNA polymerase, beta subunit, external 1 domain"/>
    <property type="match status" value="1"/>
</dbReference>
<dbReference type="Gene3D" id="2.40.270.10">
    <property type="entry name" value="DNA-directed RNA polymerase, subunit 2, domain 6"/>
    <property type="match status" value="2"/>
</dbReference>
<dbReference type="Gene3D" id="3.90.1800.10">
    <property type="entry name" value="RNA polymerase alpha subunit dimerisation domain"/>
    <property type="match status" value="1"/>
</dbReference>
<dbReference type="Gene3D" id="3.90.1110.10">
    <property type="entry name" value="RNA polymerase Rpb2, domain 2"/>
    <property type="match status" value="1"/>
</dbReference>
<dbReference type="HAMAP" id="MF_01321">
    <property type="entry name" value="RNApol_bact_RpoB"/>
    <property type="match status" value="1"/>
</dbReference>
<dbReference type="InterPro" id="IPR042107">
    <property type="entry name" value="DNA-dir_RNA_pol_bsu_ext_1_sf"/>
</dbReference>
<dbReference type="InterPro" id="IPR015712">
    <property type="entry name" value="DNA-dir_RNA_pol_su2"/>
</dbReference>
<dbReference type="InterPro" id="IPR007120">
    <property type="entry name" value="DNA-dir_RNAP_su2_dom"/>
</dbReference>
<dbReference type="InterPro" id="IPR037033">
    <property type="entry name" value="DNA-dir_RNAP_su2_hyb_sf"/>
</dbReference>
<dbReference type="InterPro" id="IPR010243">
    <property type="entry name" value="RNA_pol_bsu_bac"/>
</dbReference>
<dbReference type="InterPro" id="IPR007121">
    <property type="entry name" value="RNA_pol_bsu_CS"/>
</dbReference>
<dbReference type="InterPro" id="IPR007642">
    <property type="entry name" value="RNA_pol_Rpb2_2"/>
</dbReference>
<dbReference type="InterPro" id="IPR037034">
    <property type="entry name" value="RNA_pol_Rpb2_2_sf"/>
</dbReference>
<dbReference type="InterPro" id="IPR007645">
    <property type="entry name" value="RNA_pol_Rpb2_3"/>
</dbReference>
<dbReference type="InterPro" id="IPR007641">
    <property type="entry name" value="RNA_pol_Rpb2_7"/>
</dbReference>
<dbReference type="InterPro" id="IPR014724">
    <property type="entry name" value="RNA_pol_RPB2_OB-fold"/>
</dbReference>
<dbReference type="NCBIfam" id="NF001616">
    <property type="entry name" value="PRK00405.1"/>
    <property type="match status" value="1"/>
</dbReference>
<dbReference type="PANTHER" id="PTHR20856">
    <property type="entry name" value="DNA-DIRECTED RNA POLYMERASE I SUBUNIT 2"/>
    <property type="match status" value="1"/>
</dbReference>
<dbReference type="Pfam" id="PF04561">
    <property type="entry name" value="RNA_pol_Rpb2_2"/>
    <property type="match status" value="1"/>
</dbReference>
<dbReference type="Pfam" id="PF04565">
    <property type="entry name" value="RNA_pol_Rpb2_3"/>
    <property type="match status" value="1"/>
</dbReference>
<dbReference type="Pfam" id="PF00562">
    <property type="entry name" value="RNA_pol_Rpb2_6"/>
    <property type="match status" value="1"/>
</dbReference>
<dbReference type="Pfam" id="PF04560">
    <property type="entry name" value="RNA_pol_Rpb2_7"/>
    <property type="match status" value="1"/>
</dbReference>
<dbReference type="SUPFAM" id="SSF64484">
    <property type="entry name" value="beta and beta-prime subunits of DNA dependent RNA-polymerase"/>
    <property type="match status" value="1"/>
</dbReference>
<dbReference type="PROSITE" id="PS01166">
    <property type="entry name" value="RNA_POL_BETA"/>
    <property type="match status" value="1"/>
</dbReference>
<name>RPOB_NICSY</name>
<accession>Q3C1G7</accession>
<feature type="chain" id="PRO_0000224129" description="DNA-directed RNA polymerase subunit beta">
    <location>
        <begin position="1"/>
        <end position="1070"/>
    </location>
</feature>
<protein>
    <recommendedName>
        <fullName evidence="1">DNA-directed RNA polymerase subunit beta</fullName>
        <ecNumber evidence="1">2.7.7.6</ecNumber>
    </recommendedName>
    <alternativeName>
        <fullName evidence="1">PEP</fullName>
    </alternativeName>
    <alternativeName>
        <fullName evidence="1">Plastid-encoded RNA polymerase subunit beta</fullName>
        <shortName evidence="1">RNA polymerase subunit beta</shortName>
    </alternativeName>
</protein>
<organism>
    <name type="scientific">Nicotiana sylvestris</name>
    <name type="common">Wood tobacco</name>
    <name type="synonym">South American tobacco</name>
    <dbReference type="NCBI Taxonomy" id="4096"/>
    <lineage>
        <taxon>Eukaryota</taxon>
        <taxon>Viridiplantae</taxon>
        <taxon>Streptophyta</taxon>
        <taxon>Embryophyta</taxon>
        <taxon>Tracheophyta</taxon>
        <taxon>Spermatophyta</taxon>
        <taxon>Magnoliopsida</taxon>
        <taxon>eudicotyledons</taxon>
        <taxon>Gunneridae</taxon>
        <taxon>Pentapetalae</taxon>
        <taxon>asterids</taxon>
        <taxon>lamiids</taxon>
        <taxon>Solanales</taxon>
        <taxon>Solanaceae</taxon>
        <taxon>Nicotianoideae</taxon>
        <taxon>Nicotianeae</taxon>
        <taxon>Nicotiana</taxon>
    </lineage>
</organism>
<keyword id="KW-0150">Chloroplast</keyword>
<keyword id="KW-0240">DNA-directed RNA polymerase</keyword>
<keyword id="KW-0548">Nucleotidyltransferase</keyword>
<keyword id="KW-0934">Plastid</keyword>
<keyword id="KW-1185">Reference proteome</keyword>
<keyword id="KW-0804">Transcription</keyword>
<keyword id="KW-0808">Transferase</keyword>